<proteinExistence type="inferred from homology"/>
<keyword id="KW-0217">Developmental protein</keyword>
<keyword id="KW-1015">Disulfide bond</keyword>
<keyword id="KW-0272">Extracellular matrix</keyword>
<keyword id="KW-0325">Glycoprotein</keyword>
<keyword id="KW-0449">Lipoprotein</keyword>
<keyword id="KW-0964">Secreted</keyword>
<keyword id="KW-0732">Signal</keyword>
<keyword id="KW-0879">Wnt signaling pathway</keyword>
<gene>
    <name type="primary">WNT2</name>
</gene>
<name>WNT2_NEONE</name>
<accession>Q07E31</accession>
<comment type="function">
    <text evidence="1">Ligand for members of the frizzled family of seven transmembrane receptors. Probable developmental protein. May be a signaling molecule which affects the development of discrete regions of tissues. Is likely to signal over only few cell diameters (By similarity).</text>
</comment>
<comment type="subcellular location">
    <subcellularLocation>
        <location evidence="1">Secreted</location>
        <location evidence="1">Extracellular space</location>
        <location evidence="1">Extracellular matrix</location>
    </subcellularLocation>
</comment>
<comment type="PTM">
    <text evidence="2 4">Palmitoleoylation is required for efficient binding to frizzled receptors. Depalmitoleoylation leads to Wnt signaling pathway inhibition.</text>
</comment>
<comment type="similarity">
    <text evidence="6">Belongs to the Wnt family.</text>
</comment>
<reference key="1">
    <citation type="submission" date="2006-09" db="EMBL/GenBank/DDBJ databases">
        <title>NISC comparative sequencing initiative.</title>
        <authorList>
            <person name="Antonellis A."/>
            <person name="Ayele K."/>
            <person name="Benjamin B."/>
            <person name="Blakesley R.W."/>
            <person name="Boakye A."/>
            <person name="Bouffard G.G."/>
            <person name="Brinkley C."/>
            <person name="Brooks S."/>
            <person name="Chu G."/>
            <person name="Coleman H."/>
            <person name="Engle J."/>
            <person name="Gestole M."/>
            <person name="Greene A."/>
            <person name="Guan X."/>
            <person name="Gupta J."/>
            <person name="Haghighi P."/>
            <person name="Han J."/>
            <person name="Hansen N."/>
            <person name="Ho S.-L."/>
            <person name="Hu P."/>
            <person name="Hunter G."/>
            <person name="Hurle B."/>
            <person name="Idol J.R."/>
            <person name="Kwong P."/>
            <person name="Laric P."/>
            <person name="Larson S."/>
            <person name="Lee-Lin S.-Q."/>
            <person name="Legaspi R."/>
            <person name="Madden M."/>
            <person name="Maduro Q.L."/>
            <person name="Maduro V.B."/>
            <person name="Margulies E.H."/>
            <person name="Masiello C."/>
            <person name="Maskeri B."/>
            <person name="McDowell J."/>
            <person name="Mojidi H.A."/>
            <person name="Mullikin J.C."/>
            <person name="Oestreicher J.S."/>
            <person name="Park M."/>
            <person name="Portnoy M.E."/>
            <person name="Prasad A."/>
            <person name="Puri O."/>
            <person name="Reddix-Dugue N."/>
            <person name="Schandler K."/>
            <person name="Schueler M.G."/>
            <person name="Sison C."/>
            <person name="Stantripop S."/>
            <person name="Stephen E."/>
            <person name="Taye A."/>
            <person name="Thomas J.W."/>
            <person name="Thomas P.J."/>
            <person name="Tsipouri V."/>
            <person name="Ung L."/>
            <person name="Vogt J.L."/>
            <person name="Wetherby K.D."/>
            <person name="Young A."/>
            <person name="Green E.D."/>
        </authorList>
    </citation>
    <scope>NUCLEOTIDE SEQUENCE [LARGE SCALE GENOMIC DNA]</scope>
</reference>
<evidence type="ECO:0000250" key="1"/>
<evidence type="ECO:0000250" key="2">
    <source>
        <dbReference type="UniProtKB" id="P27467"/>
    </source>
</evidence>
<evidence type="ECO:0000250" key="3">
    <source>
        <dbReference type="UniProtKB" id="P28026"/>
    </source>
</evidence>
<evidence type="ECO:0000250" key="4">
    <source>
        <dbReference type="UniProtKB" id="P56704"/>
    </source>
</evidence>
<evidence type="ECO:0000255" key="5"/>
<evidence type="ECO:0000305" key="6"/>
<protein>
    <recommendedName>
        <fullName>Protein Wnt-2</fullName>
    </recommendedName>
</protein>
<feature type="signal peptide" evidence="5">
    <location>
        <begin position="1"/>
        <end position="25"/>
    </location>
</feature>
<feature type="chain" id="PRO_0000260345" description="Protein Wnt-2">
    <location>
        <begin position="26"/>
        <end position="360"/>
    </location>
</feature>
<feature type="lipid moiety-binding region" description="O-palmitoleoyl serine; by PORCN" evidence="4">
    <location>
        <position position="212"/>
    </location>
</feature>
<feature type="glycosylation site" description="N-linked (GlcNAc...) asparagine" evidence="5">
    <location>
        <position position="295"/>
    </location>
</feature>
<feature type="disulfide bond" evidence="3">
    <location>
        <begin position="76"/>
        <end position="87"/>
    </location>
</feature>
<feature type="disulfide bond" evidence="3">
    <location>
        <begin position="127"/>
        <end position="135"/>
    </location>
</feature>
<feature type="disulfide bond" evidence="3">
    <location>
        <begin position="137"/>
        <end position="157"/>
    </location>
</feature>
<feature type="disulfide bond" evidence="3">
    <location>
        <begin position="206"/>
        <end position="220"/>
    </location>
</feature>
<feature type="disulfide bond" evidence="3">
    <location>
        <begin position="208"/>
        <end position="215"/>
    </location>
</feature>
<feature type="disulfide bond" evidence="3">
    <location>
        <begin position="278"/>
        <end position="309"/>
    </location>
</feature>
<feature type="disulfide bond" evidence="3">
    <location>
        <begin position="294"/>
        <end position="304"/>
    </location>
</feature>
<feature type="disulfide bond" evidence="3">
    <location>
        <begin position="308"/>
        <end position="348"/>
    </location>
</feature>
<feature type="disulfide bond" evidence="3">
    <location>
        <begin position="324"/>
        <end position="339"/>
    </location>
</feature>
<feature type="disulfide bond" evidence="3">
    <location>
        <begin position="326"/>
        <end position="336"/>
    </location>
</feature>
<feature type="disulfide bond" evidence="3">
    <location>
        <begin position="331"/>
        <end position="332"/>
    </location>
</feature>
<sequence>MNAPLGGIWPWLPLLLTWLTPEVSSSWWYMRATGGSSRVMCDNVPGLVSRQRQLCHRHPDVMRAIGLGVAEWTAECQHQFRQHRWNCNTLDRDHSLFGRVLLRSSRESAFVYAVSSAGVVFAITRACSQGELKSCSCDPKKKGTAKDSKGNFDWGGCSDNIDYGIKFARAFVDAKERKGKDARALMNLHNNRAGRKAVKRFLKQECKCHGVSGSCTLRTCWLAMADFRKTGDYLWRKYNGAIQVVMNQDGTGFTVANKRFKKPTKNDLVYFENSPDYCIRDRDAGSLGTAGRVCNLTSRGMDSCEVMCCGRGYDTSHVTRMTKCECKFHWCCAVRCQDCLEALDVHTCKAPKSVDWAAPT</sequence>
<dbReference type="EMBL" id="DP000182">
    <property type="protein sequence ID" value="ABI93645.1"/>
    <property type="molecule type" value="Genomic_DNA"/>
</dbReference>
<dbReference type="RefSeq" id="XP_058580485.1">
    <property type="nucleotide sequence ID" value="XM_058724502.1"/>
</dbReference>
<dbReference type="SMR" id="Q07E31"/>
<dbReference type="GlyCosmos" id="Q07E31">
    <property type="glycosylation" value="1 site, No reported glycans"/>
</dbReference>
<dbReference type="GeneID" id="131509090"/>
<dbReference type="GO" id="GO:0005615">
    <property type="term" value="C:extracellular space"/>
    <property type="evidence" value="ECO:0007669"/>
    <property type="project" value="TreeGrafter"/>
</dbReference>
<dbReference type="GO" id="GO:0005125">
    <property type="term" value="F:cytokine activity"/>
    <property type="evidence" value="ECO:0007669"/>
    <property type="project" value="TreeGrafter"/>
</dbReference>
<dbReference type="GO" id="GO:0005109">
    <property type="term" value="F:frizzled binding"/>
    <property type="evidence" value="ECO:0007669"/>
    <property type="project" value="TreeGrafter"/>
</dbReference>
<dbReference type="GO" id="GO:0048513">
    <property type="term" value="P:animal organ development"/>
    <property type="evidence" value="ECO:0007669"/>
    <property type="project" value="UniProtKB-ARBA"/>
</dbReference>
<dbReference type="GO" id="GO:0060070">
    <property type="term" value="P:canonical Wnt signaling pathway"/>
    <property type="evidence" value="ECO:0007669"/>
    <property type="project" value="TreeGrafter"/>
</dbReference>
<dbReference type="GO" id="GO:0045165">
    <property type="term" value="P:cell fate commitment"/>
    <property type="evidence" value="ECO:0007669"/>
    <property type="project" value="TreeGrafter"/>
</dbReference>
<dbReference type="GO" id="GO:0030182">
    <property type="term" value="P:neuron differentiation"/>
    <property type="evidence" value="ECO:0007669"/>
    <property type="project" value="TreeGrafter"/>
</dbReference>
<dbReference type="CDD" id="cd19345">
    <property type="entry name" value="Wnt_Wnt2"/>
    <property type="match status" value="1"/>
</dbReference>
<dbReference type="FunFam" id="3.30.2460.20:FF:000001">
    <property type="entry name" value="Wnt homolog"/>
    <property type="match status" value="1"/>
</dbReference>
<dbReference type="Gene3D" id="3.30.2460.20">
    <property type="match status" value="1"/>
</dbReference>
<dbReference type="InterPro" id="IPR005817">
    <property type="entry name" value="Wnt"/>
</dbReference>
<dbReference type="InterPro" id="IPR009140">
    <property type="entry name" value="Wnt2"/>
</dbReference>
<dbReference type="InterPro" id="IPR043158">
    <property type="entry name" value="Wnt_C"/>
</dbReference>
<dbReference type="InterPro" id="IPR018161">
    <property type="entry name" value="Wnt_CS"/>
</dbReference>
<dbReference type="PANTHER" id="PTHR12027:SF86">
    <property type="entry name" value="PROTEIN WNT-2"/>
    <property type="match status" value="1"/>
</dbReference>
<dbReference type="PANTHER" id="PTHR12027">
    <property type="entry name" value="WNT RELATED"/>
    <property type="match status" value="1"/>
</dbReference>
<dbReference type="Pfam" id="PF00110">
    <property type="entry name" value="wnt"/>
    <property type="match status" value="1"/>
</dbReference>
<dbReference type="PRINTS" id="PR01842">
    <property type="entry name" value="WNT2PROTEIN"/>
</dbReference>
<dbReference type="PRINTS" id="PR01349">
    <property type="entry name" value="WNTPROTEIN"/>
</dbReference>
<dbReference type="SMART" id="SM00097">
    <property type="entry name" value="WNT1"/>
    <property type="match status" value="1"/>
</dbReference>
<dbReference type="PROSITE" id="PS00246">
    <property type="entry name" value="WNT1"/>
    <property type="match status" value="1"/>
</dbReference>
<organism>
    <name type="scientific">Neofelis nebulosa</name>
    <name type="common">Clouded leopard</name>
    <dbReference type="NCBI Taxonomy" id="61452"/>
    <lineage>
        <taxon>Eukaryota</taxon>
        <taxon>Metazoa</taxon>
        <taxon>Chordata</taxon>
        <taxon>Craniata</taxon>
        <taxon>Vertebrata</taxon>
        <taxon>Euteleostomi</taxon>
        <taxon>Mammalia</taxon>
        <taxon>Eutheria</taxon>
        <taxon>Laurasiatheria</taxon>
        <taxon>Carnivora</taxon>
        <taxon>Feliformia</taxon>
        <taxon>Felidae</taxon>
        <taxon>Pantherinae</taxon>
        <taxon>Neofelis</taxon>
    </lineage>
</organism>